<sequence>MCPLMAENHEVIEEGNSSELPLSAEDAKKLTELAENVLQGWDVQAEKIDVIQGNQMALVWKVHTDSGAVCLKRIHRPEKKALFSIFAQDYLAKKGMNVPGILPNKKGSLYSKHGSFLFVVYDWIEGRPFELTVKQDLEFIMKGLADFHTASVGYQPPNGVPIFTKLGRWPNHYTKRCKQMETWKLMAEAEKEDPFSQLYLQEIDGFIEDGLRIKDRLLQSTYVPWTEQLKKSPNLCHQDYGTGNTLLGENEQIWVIDLDTVSFDLPIRDLRKMIIPLLDTTGVWDDETFNVMLNAYESRAPLTEEQKQVMFIDMLFPYELYDVIREKYVRKSALPKEELESAFEYERIKANALRQLI</sequence>
<organism>
    <name type="scientific">Bacillus subtilis (strain 168)</name>
    <dbReference type="NCBI Taxonomy" id="224308"/>
    <lineage>
        <taxon>Bacteria</taxon>
        <taxon>Bacillati</taxon>
        <taxon>Bacillota</taxon>
        <taxon>Bacilli</taxon>
        <taxon>Bacillales</taxon>
        <taxon>Bacillaceae</taxon>
        <taxon>Bacillus</taxon>
    </lineage>
</organism>
<keyword id="KW-0002">3D-structure</keyword>
<keyword id="KW-1185">Reference proteome</keyword>
<keyword id="KW-0749">Sporulation</keyword>
<feature type="chain" id="PRO_0000360482" description="Spore coat protein I">
    <location>
        <begin position="1"/>
        <end position="357"/>
    </location>
</feature>
<feature type="helix" evidence="3">
    <location>
        <begin position="25"/>
        <end position="37"/>
    </location>
</feature>
<feature type="helix" evidence="3">
    <location>
        <begin position="38"/>
        <end position="40"/>
    </location>
</feature>
<feature type="strand" evidence="3">
    <location>
        <begin position="47"/>
        <end position="50"/>
    </location>
</feature>
<feature type="strand" evidence="3">
    <location>
        <begin position="58"/>
        <end position="64"/>
    </location>
</feature>
<feature type="strand" evidence="3">
    <location>
        <begin position="67"/>
        <end position="74"/>
    </location>
</feature>
<feature type="helix" evidence="3">
    <location>
        <begin position="78"/>
        <end position="94"/>
    </location>
</feature>
<feature type="strand" evidence="3">
    <location>
        <begin position="111"/>
        <end position="113"/>
    </location>
</feature>
<feature type="strand" evidence="3">
    <location>
        <begin position="116"/>
        <end position="122"/>
    </location>
</feature>
<feature type="helix" evidence="3">
    <location>
        <begin position="134"/>
        <end position="151"/>
    </location>
</feature>
<feature type="helix" evidence="3">
    <location>
        <begin position="169"/>
        <end position="189"/>
    </location>
</feature>
<feature type="helix" evidence="3">
    <location>
        <begin position="194"/>
        <end position="219"/>
    </location>
</feature>
<feature type="helix" evidence="3">
    <location>
        <begin position="222"/>
        <end position="231"/>
    </location>
</feature>
<feature type="strand" evidence="3">
    <location>
        <begin position="244"/>
        <end position="247"/>
    </location>
</feature>
<feature type="helix" evidence="3">
    <location>
        <begin position="249"/>
        <end position="251"/>
    </location>
</feature>
<feature type="strand" evidence="3">
    <location>
        <begin position="253"/>
        <end position="255"/>
    </location>
</feature>
<feature type="helix" evidence="3">
    <location>
        <begin position="267"/>
        <end position="277"/>
    </location>
</feature>
<feature type="helix" evidence="3">
    <location>
        <begin position="286"/>
        <end position="299"/>
    </location>
</feature>
<feature type="helix" evidence="3">
    <location>
        <begin position="304"/>
        <end position="315"/>
    </location>
</feature>
<feature type="helix" evidence="3">
    <location>
        <begin position="318"/>
        <end position="328"/>
    </location>
</feature>
<feature type="helix" evidence="3">
    <location>
        <begin position="336"/>
        <end position="353"/>
    </location>
</feature>
<feature type="turn" evidence="3">
    <location>
        <begin position="354"/>
        <end position="356"/>
    </location>
</feature>
<accession>O34656</accession>
<accession>Q7BVV0</accession>
<reference key="1">
    <citation type="journal article" date="1995" name="Microbiology">
        <title>A Bacillus subtilis spore coat polypeptide gene, cotS.</title>
        <authorList>
            <person name="Abe A."/>
            <person name="Koide H."/>
            <person name="Kohno T."/>
            <person name="Watabe K."/>
        </authorList>
    </citation>
    <scope>NUCLEOTIDE SEQUENCE [GENOMIC DNA]</scope>
</reference>
<reference key="2">
    <citation type="journal article" date="1997" name="Microbiology">
        <title>Sequencing and functional annotation of the Bacillus subtilis genes in the 200 kb rrnB-dnaB region.</title>
        <authorList>
            <person name="Lapidus A."/>
            <person name="Galleron N."/>
            <person name="Sorokin A."/>
            <person name="Ehrlich S.D."/>
        </authorList>
    </citation>
    <scope>NUCLEOTIDE SEQUENCE [GENOMIC DNA]</scope>
</reference>
<reference key="3">
    <citation type="journal article" date="1997" name="Nature">
        <title>The complete genome sequence of the Gram-positive bacterium Bacillus subtilis.</title>
        <authorList>
            <person name="Kunst F."/>
            <person name="Ogasawara N."/>
            <person name="Moszer I."/>
            <person name="Albertini A.M."/>
            <person name="Alloni G."/>
            <person name="Azevedo V."/>
            <person name="Bertero M.G."/>
            <person name="Bessieres P."/>
            <person name="Bolotin A."/>
            <person name="Borchert S."/>
            <person name="Borriss R."/>
            <person name="Boursier L."/>
            <person name="Brans A."/>
            <person name="Braun M."/>
            <person name="Brignell S.C."/>
            <person name="Bron S."/>
            <person name="Brouillet S."/>
            <person name="Bruschi C.V."/>
            <person name="Caldwell B."/>
            <person name="Capuano V."/>
            <person name="Carter N.M."/>
            <person name="Choi S.-K."/>
            <person name="Codani J.-J."/>
            <person name="Connerton I.F."/>
            <person name="Cummings N.J."/>
            <person name="Daniel R.A."/>
            <person name="Denizot F."/>
            <person name="Devine K.M."/>
            <person name="Duesterhoeft A."/>
            <person name="Ehrlich S.D."/>
            <person name="Emmerson P.T."/>
            <person name="Entian K.-D."/>
            <person name="Errington J."/>
            <person name="Fabret C."/>
            <person name="Ferrari E."/>
            <person name="Foulger D."/>
            <person name="Fritz C."/>
            <person name="Fujita M."/>
            <person name="Fujita Y."/>
            <person name="Fuma S."/>
            <person name="Galizzi A."/>
            <person name="Galleron N."/>
            <person name="Ghim S.-Y."/>
            <person name="Glaser P."/>
            <person name="Goffeau A."/>
            <person name="Golightly E.J."/>
            <person name="Grandi G."/>
            <person name="Guiseppi G."/>
            <person name="Guy B.J."/>
            <person name="Haga K."/>
            <person name="Haiech J."/>
            <person name="Harwood C.R."/>
            <person name="Henaut A."/>
            <person name="Hilbert H."/>
            <person name="Holsappel S."/>
            <person name="Hosono S."/>
            <person name="Hullo M.-F."/>
            <person name="Itaya M."/>
            <person name="Jones L.-M."/>
            <person name="Joris B."/>
            <person name="Karamata D."/>
            <person name="Kasahara Y."/>
            <person name="Klaerr-Blanchard M."/>
            <person name="Klein C."/>
            <person name="Kobayashi Y."/>
            <person name="Koetter P."/>
            <person name="Koningstein G."/>
            <person name="Krogh S."/>
            <person name="Kumano M."/>
            <person name="Kurita K."/>
            <person name="Lapidus A."/>
            <person name="Lardinois S."/>
            <person name="Lauber J."/>
            <person name="Lazarevic V."/>
            <person name="Lee S.-M."/>
            <person name="Levine A."/>
            <person name="Liu H."/>
            <person name="Masuda S."/>
            <person name="Mauel C."/>
            <person name="Medigue C."/>
            <person name="Medina N."/>
            <person name="Mellado R.P."/>
            <person name="Mizuno M."/>
            <person name="Moestl D."/>
            <person name="Nakai S."/>
            <person name="Noback M."/>
            <person name="Noone D."/>
            <person name="O'Reilly M."/>
            <person name="Ogawa K."/>
            <person name="Ogiwara A."/>
            <person name="Oudega B."/>
            <person name="Park S.-H."/>
            <person name="Parro V."/>
            <person name="Pohl T.M."/>
            <person name="Portetelle D."/>
            <person name="Porwollik S."/>
            <person name="Prescott A.M."/>
            <person name="Presecan E."/>
            <person name="Pujic P."/>
            <person name="Purnelle B."/>
            <person name="Rapoport G."/>
            <person name="Rey M."/>
            <person name="Reynolds S."/>
            <person name="Rieger M."/>
            <person name="Rivolta C."/>
            <person name="Rocha E."/>
            <person name="Roche B."/>
            <person name="Rose M."/>
            <person name="Sadaie Y."/>
            <person name="Sato T."/>
            <person name="Scanlan E."/>
            <person name="Schleich S."/>
            <person name="Schroeter R."/>
            <person name="Scoffone F."/>
            <person name="Sekiguchi J."/>
            <person name="Sekowska A."/>
            <person name="Seror S.J."/>
            <person name="Serror P."/>
            <person name="Shin B.-S."/>
            <person name="Soldo B."/>
            <person name="Sorokin A."/>
            <person name="Tacconi E."/>
            <person name="Takagi T."/>
            <person name="Takahashi H."/>
            <person name="Takemaru K."/>
            <person name="Takeuchi M."/>
            <person name="Tamakoshi A."/>
            <person name="Tanaka T."/>
            <person name="Terpstra P."/>
            <person name="Tognoni A."/>
            <person name="Tosato V."/>
            <person name="Uchiyama S."/>
            <person name="Vandenbol M."/>
            <person name="Vannier F."/>
            <person name="Vassarotti A."/>
            <person name="Viari A."/>
            <person name="Wambutt R."/>
            <person name="Wedler E."/>
            <person name="Wedler H."/>
            <person name="Weitzenegger T."/>
            <person name="Winters P."/>
            <person name="Wipat A."/>
            <person name="Yamamoto H."/>
            <person name="Yamane K."/>
            <person name="Yasumoto K."/>
            <person name="Yata K."/>
            <person name="Yoshida K."/>
            <person name="Yoshikawa H.-F."/>
            <person name="Zumstein E."/>
            <person name="Yoshikawa H."/>
            <person name="Danchin A."/>
        </authorList>
    </citation>
    <scope>NUCLEOTIDE SEQUENCE [LARGE SCALE GENOMIC DNA]</scope>
    <source>
        <strain>168</strain>
    </source>
</reference>
<reference key="4">
    <citation type="journal article" date="2003" name="J. Bacteriol.">
        <title>Proteomic analysis of the spore coats of Bacillus subtilis and Bacillus anthracis.</title>
        <authorList>
            <person name="Lai E.-M."/>
            <person name="Phadke N.D."/>
            <person name="Kachman M.T."/>
            <person name="Giorno R."/>
            <person name="Vazquez S."/>
            <person name="Vazquez J.A."/>
            <person name="Maddock J.R."/>
            <person name="Driks A."/>
        </authorList>
    </citation>
    <scope>IDENTIFICATION BY MASS SPECTROMETRY</scope>
    <scope>SUBCELLULAR LOCATION</scope>
</reference>
<gene>
    <name type="primary">cotI</name>
    <name type="synonym">ytaA</name>
    <name type="ordered locus">BSU30920</name>
</gene>
<proteinExistence type="evidence at protein level"/>
<dbReference type="EMBL" id="AF008220">
    <property type="protein sequence ID" value="AAC00364.1"/>
    <property type="molecule type" value="Genomic_DNA"/>
</dbReference>
<dbReference type="EMBL" id="AL009126">
    <property type="protein sequence ID" value="CAB15070.1"/>
    <property type="molecule type" value="Genomic_DNA"/>
</dbReference>
<dbReference type="PIR" id="F69987">
    <property type="entry name" value="F69987"/>
</dbReference>
<dbReference type="RefSeq" id="NP_390970.1">
    <property type="nucleotide sequence ID" value="NC_000964.3"/>
</dbReference>
<dbReference type="RefSeq" id="WP_010886600.1">
    <property type="nucleotide sequence ID" value="NZ_OZ025638.1"/>
</dbReference>
<dbReference type="PDB" id="2Q83">
    <property type="method" value="X-ray"/>
    <property type="resolution" value="2.50 A"/>
    <property type="chains" value="A/B=13-357"/>
</dbReference>
<dbReference type="PDBsum" id="2Q83"/>
<dbReference type="SMR" id="O34656"/>
<dbReference type="FunCoup" id="O34656">
    <property type="interactions" value="152"/>
</dbReference>
<dbReference type="STRING" id="224308.BSU30920"/>
<dbReference type="PaxDb" id="224308-BSU30920"/>
<dbReference type="DNASU" id="936682"/>
<dbReference type="EnsemblBacteria" id="CAB15070">
    <property type="protein sequence ID" value="CAB15070"/>
    <property type="gene ID" value="BSU_30920"/>
</dbReference>
<dbReference type="GeneID" id="936682"/>
<dbReference type="KEGG" id="bsu:BSU30920"/>
<dbReference type="PATRIC" id="fig|224308.43.peg.3233"/>
<dbReference type="eggNOG" id="COG2334">
    <property type="taxonomic scope" value="Bacteria"/>
</dbReference>
<dbReference type="InParanoid" id="O34656"/>
<dbReference type="OrthoDB" id="9771902at2"/>
<dbReference type="PhylomeDB" id="O34656"/>
<dbReference type="BioCyc" id="BSUB:BSU30920-MONOMER"/>
<dbReference type="EvolutionaryTrace" id="O34656"/>
<dbReference type="Proteomes" id="UP000001570">
    <property type="component" value="Chromosome"/>
</dbReference>
<dbReference type="GO" id="GO:0042601">
    <property type="term" value="C:endospore-forming forespore"/>
    <property type="evidence" value="ECO:0000318"/>
    <property type="project" value="GO_Central"/>
</dbReference>
<dbReference type="GO" id="GO:0030435">
    <property type="term" value="P:sporulation resulting in formation of a cellular spore"/>
    <property type="evidence" value="ECO:0007669"/>
    <property type="project" value="UniProtKB-KW"/>
</dbReference>
<dbReference type="Gene3D" id="3.90.1200.10">
    <property type="match status" value="1"/>
</dbReference>
<dbReference type="Gene3D" id="3.30.200.20">
    <property type="entry name" value="Phosphorylase Kinase, domain 1"/>
    <property type="match status" value="1"/>
</dbReference>
<dbReference type="InterPro" id="IPR002575">
    <property type="entry name" value="Aminoglycoside_PTrfase"/>
</dbReference>
<dbReference type="InterPro" id="IPR047175">
    <property type="entry name" value="CotS-like"/>
</dbReference>
<dbReference type="InterPro" id="IPR011009">
    <property type="entry name" value="Kinase-like_dom_sf"/>
</dbReference>
<dbReference type="InterPro" id="IPR014255">
    <property type="entry name" value="Spore_coat_CotS"/>
</dbReference>
<dbReference type="NCBIfam" id="TIGR02906">
    <property type="entry name" value="spore_CotS"/>
    <property type="match status" value="1"/>
</dbReference>
<dbReference type="PANTHER" id="PTHR39179">
    <property type="entry name" value="SPORE COAT PROTEIN I"/>
    <property type="match status" value="1"/>
</dbReference>
<dbReference type="PANTHER" id="PTHR39179:SF1">
    <property type="entry name" value="SPORE COAT PROTEIN I"/>
    <property type="match status" value="1"/>
</dbReference>
<dbReference type="Pfam" id="PF01636">
    <property type="entry name" value="APH"/>
    <property type="match status" value="1"/>
</dbReference>
<dbReference type="SUPFAM" id="SSF56112">
    <property type="entry name" value="Protein kinase-like (PK-like)"/>
    <property type="match status" value="1"/>
</dbReference>
<protein>
    <recommendedName>
        <fullName>Spore coat protein I</fullName>
    </recommendedName>
</protein>
<name>COTI_BACSU</name>
<comment type="subcellular location">
    <subcellularLocation>
        <location evidence="1">Spore coat</location>
    </subcellularLocation>
</comment>
<comment type="similarity">
    <text evidence="2">Belongs to the CotS family.</text>
</comment>
<evidence type="ECO:0000269" key="1">
    <source>
    </source>
</evidence>
<evidence type="ECO:0000305" key="2"/>
<evidence type="ECO:0007829" key="3">
    <source>
        <dbReference type="PDB" id="2Q83"/>
    </source>
</evidence>